<protein>
    <recommendedName>
        <fullName evidence="1">Small ribosomal subunit protein bS21</fullName>
    </recommendedName>
    <alternativeName>
        <fullName evidence="2">30S ribosomal protein S21</fullName>
    </alternativeName>
</protein>
<dbReference type="EMBL" id="CP000090">
    <property type="protein sequence ID" value="AAZ61656.1"/>
    <property type="molecule type" value="Genomic_DNA"/>
</dbReference>
<dbReference type="SMR" id="Q46YX7"/>
<dbReference type="STRING" id="264198.Reut_A2294"/>
<dbReference type="KEGG" id="reu:Reut_A2294"/>
<dbReference type="eggNOG" id="COG0828">
    <property type="taxonomic scope" value="Bacteria"/>
</dbReference>
<dbReference type="HOGENOM" id="CLU_159258_1_1_4"/>
<dbReference type="OrthoDB" id="9799244at2"/>
<dbReference type="GO" id="GO:1990904">
    <property type="term" value="C:ribonucleoprotein complex"/>
    <property type="evidence" value="ECO:0007669"/>
    <property type="project" value="UniProtKB-KW"/>
</dbReference>
<dbReference type="GO" id="GO:0005840">
    <property type="term" value="C:ribosome"/>
    <property type="evidence" value="ECO:0007669"/>
    <property type="project" value="UniProtKB-KW"/>
</dbReference>
<dbReference type="GO" id="GO:0003735">
    <property type="term" value="F:structural constituent of ribosome"/>
    <property type="evidence" value="ECO:0007669"/>
    <property type="project" value="InterPro"/>
</dbReference>
<dbReference type="GO" id="GO:0006412">
    <property type="term" value="P:translation"/>
    <property type="evidence" value="ECO:0007669"/>
    <property type="project" value="UniProtKB-UniRule"/>
</dbReference>
<dbReference type="Gene3D" id="1.20.5.1150">
    <property type="entry name" value="Ribosomal protein S8"/>
    <property type="match status" value="1"/>
</dbReference>
<dbReference type="HAMAP" id="MF_00358">
    <property type="entry name" value="Ribosomal_bS21"/>
    <property type="match status" value="1"/>
</dbReference>
<dbReference type="InterPro" id="IPR001911">
    <property type="entry name" value="Ribosomal_bS21"/>
</dbReference>
<dbReference type="InterPro" id="IPR038380">
    <property type="entry name" value="Ribosomal_bS21_sf"/>
</dbReference>
<dbReference type="NCBIfam" id="TIGR00030">
    <property type="entry name" value="S21p"/>
    <property type="match status" value="1"/>
</dbReference>
<dbReference type="PANTHER" id="PTHR21109">
    <property type="entry name" value="MITOCHONDRIAL 28S RIBOSOMAL PROTEIN S21"/>
    <property type="match status" value="1"/>
</dbReference>
<dbReference type="PANTHER" id="PTHR21109:SF22">
    <property type="entry name" value="SMALL RIBOSOMAL SUBUNIT PROTEIN BS21"/>
    <property type="match status" value="1"/>
</dbReference>
<dbReference type="Pfam" id="PF01165">
    <property type="entry name" value="Ribosomal_S21"/>
    <property type="match status" value="1"/>
</dbReference>
<dbReference type="PRINTS" id="PR00976">
    <property type="entry name" value="RIBOSOMALS21"/>
</dbReference>
<name>RS21_CUPPJ</name>
<sequence>MTKIVLKPGEPVEVAMRRFRRAILQTGLIVELKSRTAYEKPTTERKRKKKAAEARLRKRLRMQMLPKKLY</sequence>
<proteinExistence type="inferred from homology"/>
<comment type="similarity">
    <text evidence="1">Belongs to the bacterial ribosomal protein bS21 family.</text>
</comment>
<accession>Q46YX7</accession>
<gene>
    <name evidence="1" type="primary">rpsU</name>
    <name type="ordered locus">Reut_A2294</name>
</gene>
<organism>
    <name type="scientific">Cupriavidus pinatubonensis (strain JMP 134 / LMG 1197)</name>
    <name type="common">Cupriavidus necator (strain JMP 134)</name>
    <dbReference type="NCBI Taxonomy" id="264198"/>
    <lineage>
        <taxon>Bacteria</taxon>
        <taxon>Pseudomonadati</taxon>
        <taxon>Pseudomonadota</taxon>
        <taxon>Betaproteobacteria</taxon>
        <taxon>Burkholderiales</taxon>
        <taxon>Burkholderiaceae</taxon>
        <taxon>Cupriavidus</taxon>
    </lineage>
</organism>
<reference key="1">
    <citation type="journal article" date="2010" name="PLoS ONE">
        <title>The complete multipartite genome sequence of Cupriavidus necator JMP134, a versatile pollutant degrader.</title>
        <authorList>
            <person name="Lykidis A."/>
            <person name="Perez-Pantoja D."/>
            <person name="Ledger T."/>
            <person name="Mavromatis K."/>
            <person name="Anderson I.J."/>
            <person name="Ivanova N.N."/>
            <person name="Hooper S.D."/>
            <person name="Lapidus A."/>
            <person name="Lucas S."/>
            <person name="Gonzalez B."/>
            <person name="Kyrpides N.C."/>
        </authorList>
    </citation>
    <scope>NUCLEOTIDE SEQUENCE [LARGE SCALE GENOMIC DNA]</scope>
    <source>
        <strain>JMP134 / LMG 1197</strain>
    </source>
</reference>
<feature type="chain" id="PRO_0000266741" description="Small ribosomal subunit protein bS21">
    <location>
        <begin position="1"/>
        <end position="70"/>
    </location>
</feature>
<keyword id="KW-0687">Ribonucleoprotein</keyword>
<keyword id="KW-0689">Ribosomal protein</keyword>
<evidence type="ECO:0000255" key="1">
    <source>
        <dbReference type="HAMAP-Rule" id="MF_00358"/>
    </source>
</evidence>
<evidence type="ECO:0000305" key="2"/>